<accession>Q8DGS4</accession>
<comment type="function">
    <text evidence="1">This protein is involved in the repair of mismatches in DNA. It is possible that it carries out the mismatch recognition step. This protein has a weak ATPase activity.</text>
</comment>
<comment type="similarity">
    <text evidence="1">Belongs to the DNA mismatch repair MutS family.</text>
</comment>
<protein>
    <recommendedName>
        <fullName evidence="1">DNA mismatch repair protein MutS</fullName>
    </recommendedName>
</protein>
<proteinExistence type="inferred from homology"/>
<reference key="1">
    <citation type="journal article" date="2002" name="DNA Res.">
        <title>Complete genome structure of the thermophilic cyanobacterium Thermosynechococcus elongatus BP-1.</title>
        <authorList>
            <person name="Nakamura Y."/>
            <person name="Kaneko T."/>
            <person name="Sato S."/>
            <person name="Ikeuchi M."/>
            <person name="Katoh H."/>
            <person name="Sasamoto S."/>
            <person name="Watanabe A."/>
            <person name="Iriguchi M."/>
            <person name="Kawashima K."/>
            <person name="Kimura T."/>
            <person name="Kishida Y."/>
            <person name="Kiyokawa C."/>
            <person name="Kohara M."/>
            <person name="Matsumoto M."/>
            <person name="Matsuno A."/>
            <person name="Nakazaki N."/>
            <person name="Shimpo S."/>
            <person name="Sugimoto M."/>
            <person name="Takeuchi C."/>
            <person name="Yamada M."/>
            <person name="Tabata S."/>
        </authorList>
    </citation>
    <scope>NUCLEOTIDE SEQUENCE [LARGE SCALE GENOMIC DNA]</scope>
    <source>
        <strain>NIES-2133 / IAM M-273 / BP-1</strain>
    </source>
</reference>
<dbReference type="EMBL" id="BA000039">
    <property type="protein sequence ID" value="BAC09792.1"/>
    <property type="molecule type" value="Genomic_DNA"/>
</dbReference>
<dbReference type="RefSeq" id="NP_683030.1">
    <property type="nucleotide sequence ID" value="NC_004113.1"/>
</dbReference>
<dbReference type="RefSeq" id="WP_011058073.1">
    <property type="nucleotide sequence ID" value="NC_004113.1"/>
</dbReference>
<dbReference type="SMR" id="Q8DGS4"/>
<dbReference type="STRING" id="197221.gene:10748851"/>
<dbReference type="EnsemblBacteria" id="BAC09792">
    <property type="protein sequence ID" value="BAC09792"/>
    <property type="gene ID" value="BAC09792"/>
</dbReference>
<dbReference type="KEGG" id="tel:tlr2240"/>
<dbReference type="PATRIC" id="fig|197221.4.peg.2349"/>
<dbReference type="eggNOG" id="COG0249">
    <property type="taxonomic scope" value="Bacteria"/>
</dbReference>
<dbReference type="Proteomes" id="UP000000440">
    <property type="component" value="Chromosome"/>
</dbReference>
<dbReference type="GO" id="GO:0005829">
    <property type="term" value="C:cytosol"/>
    <property type="evidence" value="ECO:0007669"/>
    <property type="project" value="TreeGrafter"/>
</dbReference>
<dbReference type="GO" id="GO:0005524">
    <property type="term" value="F:ATP binding"/>
    <property type="evidence" value="ECO:0007669"/>
    <property type="project" value="UniProtKB-UniRule"/>
</dbReference>
<dbReference type="GO" id="GO:0140664">
    <property type="term" value="F:ATP-dependent DNA damage sensor activity"/>
    <property type="evidence" value="ECO:0007669"/>
    <property type="project" value="InterPro"/>
</dbReference>
<dbReference type="GO" id="GO:0003684">
    <property type="term" value="F:damaged DNA binding"/>
    <property type="evidence" value="ECO:0007669"/>
    <property type="project" value="UniProtKB-UniRule"/>
</dbReference>
<dbReference type="GO" id="GO:0030983">
    <property type="term" value="F:mismatched DNA binding"/>
    <property type="evidence" value="ECO:0007669"/>
    <property type="project" value="InterPro"/>
</dbReference>
<dbReference type="GO" id="GO:0006298">
    <property type="term" value="P:mismatch repair"/>
    <property type="evidence" value="ECO:0007669"/>
    <property type="project" value="UniProtKB-UniRule"/>
</dbReference>
<dbReference type="CDD" id="cd03284">
    <property type="entry name" value="ABC_MutS1"/>
    <property type="match status" value="1"/>
</dbReference>
<dbReference type="FunFam" id="1.10.1420.10:FF:000001">
    <property type="entry name" value="DNA mismatch repair protein MutS"/>
    <property type="match status" value="1"/>
</dbReference>
<dbReference type="FunFam" id="3.40.50.300:FF:000870">
    <property type="entry name" value="MutS protein homolog 4"/>
    <property type="match status" value="1"/>
</dbReference>
<dbReference type="Gene3D" id="1.10.1420.10">
    <property type="match status" value="2"/>
</dbReference>
<dbReference type="Gene3D" id="3.40.1170.10">
    <property type="entry name" value="DNA repair protein MutS, domain I"/>
    <property type="match status" value="1"/>
</dbReference>
<dbReference type="Gene3D" id="3.30.420.110">
    <property type="entry name" value="MutS, connector domain"/>
    <property type="match status" value="1"/>
</dbReference>
<dbReference type="Gene3D" id="3.40.50.300">
    <property type="entry name" value="P-loop containing nucleotide triphosphate hydrolases"/>
    <property type="match status" value="1"/>
</dbReference>
<dbReference type="HAMAP" id="MF_00096">
    <property type="entry name" value="MutS"/>
    <property type="match status" value="1"/>
</dbReference>
<dbReference type="InterPro" id="IPR005748">
    <property type="entry name" value="DNA_mismatch_repair_MutS"/>
</dbReference>
<dbReference type="InterPro" id="IPR007695">
    <property type="entry name" value="DNA_mismatch_repair_MutS-lik_N"/>
</dbReference>
<dbReference type="InterPro" id="IPR017261">
    <property type="entry name" value="DNA_mismatch_repair_MutS/MSH"/>
</dbReference>
<dbReference type="InterPro" id="IPR000432">
    <property type="entry name" value="DNA_mismatch_repair_MutS_C"/>
</dbReference>
<dbReference type="InterPro" id="IPR007861">
    <property type="entry name" value="DNA_mismatch_repair_MutS_clamp"/>
</dbReference>
<dbReference type="InterPro" id="IPR007696">
    <property type="entry name" value="DNA_mismatch_repair_MutS_core"/>
</dbReference>
<dbReference type="InterPro" id="IPR016151">
    <property type="entry name" value="DNA_mismatch_repair_MutS_N"/>
</dbReference>
<dbReference type="InterPro" id="IPR036187">
    <property type="entry name" value="DNA_mismatch_repair_MutS_sf"/>
</dbReference>
<dbReference type="InterPro" id="IPR007860">
    <property type="entry name" value="DNA_mmatch_repair_MutS_con_dom"/>
</dbReference>
<dbReference type="InterPro" id="IPR045076">
    <property type="entry name" value="MutS"/>
</dbReference>
<dbReference type="InterPro" id="IPR036678">
    <property type="entry name" value="MutS_con_dom_sf"/>
</dbReference>
<dbReference type="InterPro" id="IPR027417">
    <property type="entry name" value="P-loop_NTPase"/>
</dbReference>
<dbReference type="NCBIfam" id="TIGR01070">
    <property type="entry name" value="mutS1"/>
    <property type="match status" value="1"/>
</dbReference>
<dbReference type="NCBIfam" id="NF003810">
    <property type="entry name" value="PRK05399.1"/>
    <property type="match status" value="1"/>
</dbReference>
<dbReference type="PANTHER" id="PTHR11361:SF34">
    <property type="entry name" value="DNA MISMATCH REPAIR PROTEIN MSH1, MITOCHONDRIAL"/>
    <property type="match status" value="1"/>
</dbReference>
<dbReference type="PANTHER" id="PTHR11361">
    <property type="entry name" value="DNA MISMATCH REPAIR PROTEIN MUTS FAMILY MEMBER"/>
    <property type="match status" value="1"/>
</dbReference>
<dbReference type="Pfam" id="PF01624">
    <property type="entry name" value="MutS_I"/>
    <property type="match status" value="1"/>
</dbReference>
<dbReference type="Pfam" id="PF05188">
    <property type="entry name" value="MutS_II"/>
    <property type="match status" value="1"/>
</dbReference>
<dbReference type="Pfam" id="PF05192">
    <property type="entry name" value="MutS_III"/>
    <property type="match status" value="1"/>
</dbReference>
<dbReference type="Pfam" id="PF05190">
    <property type="entry name" value="MutS_IV"/>
    <property type="match status" value="1"/>
</dbReference>
<dbReference type="Pfam" id="PF00488">
    <property type="entry name" value="MutS_V"/>
    <property type="match status" value="1"/>
</dbReference>
<dbReference type="PIRSF" id="PIRSF037677">
    <property type="entry name" value="DNA_mis_repair_Msh6"/>
    <property type="match status" value="1"/>
</dbReference>
<dbReference type="SMART" id="SM00534">
    <property type="entry name" value="MUTSac"/>
    <property type="match status" value="1"/>
</dbReference>
<dbReference type="SMART" id="SM00533">
    <property type="entry name" value="MUTSd"/>
    <property type="match status" value="1"/>
</dbReference>
<dbReference type="SUPFAM" id="SSF55271">
    <property type="entry name" value="DNA repair protein MutS, domain I"/>
    <property type="match status" value="1"/>
</dbReference>
<dbReference type="SUPFAM" id="SSF53150">
    <property type="entry name" value="DNA repair protein MutS, domain II"/>
    <property type="match status" value="1"/>
</dbReference>
<dbReference type="SUPFAM" id="SSF48334">
    <property type="entry name" value="DNA repair protein MutS, domain III"/>
    <property type="match status" value="1"/>
</dbReference>
<dbReference type="SUPFAM" id="SSF52540">
    <property type="entry name" value="P-loop containing nucleoside triphosphate hydrolases"/>
    <property type="match status" value="1"/>
</dbReference>
<dbReference type="PROSITE" id="PS00486">
    <property type="entry name" value="DNA_MISMATCH_REPAIR_2"/>
    <property type="match status" value="1"/>
</dbReference>
<name>MUTS_THEVB</name>
<organism>
    <name type="scientific">Thermosynechococcus vestitus (strain NIES-2133 / IAM M-273 / BP-1)</name>
    <dbReference type="NCBI Taxonomy" id="197221"/>
    <lineage>
        <taxon>Bacteria</taxon>
        <taxon>Bacillati</taxon>
        <taxon>Cyanobacteriota</taxon>
        <taxon>Cyanophyceae</taxon>
        <taxon>Acaryochloridales</taxon>
        <taxon>Thermosynechococcaceae</taxon>
        <taxon>Thermosynechococcus</taxon>
    </lineage>
</organism>
<evidence type="ECO:0000255" key="1">
    <source>
        <dbReference type="HAMAP-Rule" id="MF_00096"/>
    </source>
</evidence>
<evidence type="ECO:0000256" key="2">
    <source>
        <dbReference type="SAM" id="MobiDB-lite"/>
    </source>
</evidence>
<keyword id="KW-0067">ATP-binding</keyword>
<keyword id="KW-0227">DNA damage</keyword>
<keyword id="KW-0234">DNA repair</keyword>
<keyword id="KW-0238">DNA-binding</keyword>
<keyword id="KW-0547">Nucleotide-binding</keyword>
<keyword id="KW-1185">Reference proteome</keyword>
<feature type="chain" id="PRO_0000115153" description="DNA mismatch repair protein MutS">
    <location>
        <begin position="1"/>
        <end position="874"/>
    </location>
</feature>
<feature type="region of interest" description="Disordered" evidence="2">
    <location>
        <begin position="1"/>
        <end position="20"/>
    </location>
</feature>
<feature type="region of interest" description="Disordered" evidence="2">
    <location>
        <begin position="854"/>
        <end position="874"/>
    </location>
</feature>
<feature type="compositionally biased region" description="Basic and acidic residues" evidence="2">
    <location>
        <begin position="1"/>
        <end position="12"/>
    </location>
</feature>
<feature type="binding site" evidence="1">
    <location>
        <begin position="661"/>
        <end position="668"/>
    </location>
    <ligand>
        <name>ATP</name>
        <dbReference type="ChEBI" id="CHEBI:30616"/>
    </ligand>
</feature>
<sequence length="874" mass="96694">MSNDRPLTHSEAESSALRLGRNPGLQVRHDEVERSLLTPMLQHYAELKDAYPHALLLYRVGDFYETFFQDACTVARELELVLTGKEGGKEVGRVAMAGIPHHALERYCRTLIEKGYAIAICDQVEDPAQAQGLVKREVTQVFTPGTVLDTELLQPRRNNFLAAVVLSGNHWGLAYADVSTGEFCTTQGSDRADLVAELNRLQPAEILLPTEAPDINRVLRPGEGKDQLPPELPPQWCYTLRSPEDFQAAAARQRLCQRFQVKSLEGFGCEHLPLALRAAGGLVAYLDETHRQQPVPLQNLSTYSLQQYLFLDPQTRRNLELTQTVRDGSFQGSLLWAIDRTATAMGGRLLRRWLLQPLLDIEEITARQDAIAELMANSSLRQSLHRHLQEIYDLERLAGRAGSGTANARDLAALRDSFRTLVSLAAVVANTSSPYLQALAQLPPVIEQLADTLSAALVDQPPTSLSEGGILRPGAYPELDQQRQQIEQDQQWILNLEAQERQRTGISTLKVGYTKVFGYYLSVSRAKLNQVPDDYIRKQTLTNEERFITAELKEREARLLAAQSHLFELEYQYFVQLREQVAAQASTIREIAAAVAAVDALLGLAEVALYQGYCRPQLTRDRQLCIRGGRHPVVEQTLPAGFFVPNDTQLGTGADLMVLTGPNASGKSCYLRQVGLIQLLAQMGSYVPATSATLGICDRIFTRVGAVDDLATGQSTFMVEMNETANILNHAGDRSLVLLDEIGRGTATFDGLAIAWSVAEYLATILKSRTIFATHYHELNQLATLLPNVANYQVVVKELPNEIIFLHQVKPGGADRSYGIEAGRLAGLPAVVIQRAREVMCQIEKHSRITVGLRKSSMGDPPTAPEINQGELPF</sequence>
<gene>
    <name evidence="1" type="primary">mutS</name>
    <name type="ordered locus">tlr2240</name>
</gene>